<keyword id="KW-0007">Acetylation</keyword>
<keyword id="KW-0903">Direct protein sequencing</keyword>
<keyword id="KW-0249">Electron transport</keyword>
<keyword id="KW-0349">Heme</keyword>
<keyword id="KW-0408">Iron</keyword>
<keyword id="KW-0479">Metal-binding</keyword>
<keyword id="KW-0496">Mitochondrion</keyword>
<keyword id="KW-1185">Reference proteome</keyword>
<keyword id="KW-0679">Respiratory chain</keyword>
<keyword id="KW-0813">Transport</keyword>
<name>CYC_CHESE</name>
<protein>
    <recommendedName>
        <fullName>Cytochrome c</fullName>
    </recommendedName>
</protein>
<evidence type="ECO:0000269" key="1">
    <source>
    </source>
</evidence>
<evidence type="ECO:0000305" key="2"/>
<feature type="initiator methionine" description="Removed" evidence="1">
    <location>
        <position position="1"/>
    </location>
</feature>
<feature type="chain" id="PRO_0000108249" description="Cytochrome c">
    <location>
        <begin position="2"/>
        <end position="105"/>
    </location>
</feature>
<feature type="binding site" description="covalent">
    <location>
        <position position="15"/>
    </location>
    <ligand>
        <name>heme c</name>
        <dbReference type="ChEBI" id="CHEBI:61717"/>
    </ligand>
</feature>
<feature type="binding site" description="covalent">
    <location>
        <position position="18"/>
    </location>
    <ligand>
        <name>heme c</name>
        <dbReference type="ChEBI" id="CHEBI:61717"/>
    </ligand>
</feature>
<feature type="binding site" description="axial binding residue">
    <location>
        <position position="19"/>
    </location>
    <ligand>
        <name>heme c</name>
        <dbReference type="ChEBI" id="CHEBI:61717"/>
    </ligand>
    <ligandPart>
        <name>Fe</name>
        <dbReference type="ChEBI" id="CHEBI:18248"/>
    </ligandPart>
</feature>
<feature type="binding site" description="axial binding residue">
    <location>
        <position position="81"/>
    </location>
    <ligand>
        <name>heme c</name>
        <dbReference type="ChEBI" id="CHEBI:61717"/>
    </ligand>
    <ligandPart>
        <name>Fe</name>
        <dbReference type="ChEBI" id="CHEBI:18248"/>
    </ligandPart>
</feature>
<feature type="modified residue" description="N-acetylglycine" evidence="1">
    <location>
        <position position="2"/>
    </location>
</feature>
<dbReference type="PIR" id="A00019">
    <property type="entry name" value="CCST"/>
</dbReference>
<dbReference type="SMR" id="P00022"/>
<dbReference type="iPTMnet" id="P00022"/>
<dbReference type="Ensembl" id="ENSCSRT00000024116.1">
    <property type="protein sequence ID" value="ENSCSRP00000023105.1"/>
    <property type="gene ID" value="ENSCSRG00000017375.1"/>
</dbReference>
<dbReference type="OrthoDB" id="449280at2759"/>
<dbReference type="Proteomes" id="UP000694403">
    <property type="component" value="Unplaced"/>
</dbReference>
<dbReference type="GO" id="GO:0005758">
    <property type="term" value="C:mitochondrial intermembrane space"/>
    <property type="evidence" value="ECO:0007669"/>
    <property type="project" value="UniProtKB-SubCell"/>
</dbReference>
<dbReference type="GO" id="GO:0009055">
    <property type="term" value="F:electron transfer activity"/>
    <property type="evidence" value="ECO:0007669"/>
    <property type="project" value="InterPro"/>
</dbReference>
<dbReference type="GO" id="GO:0020037">
    <property type="term" value="F:heme binding"/>
    <property type="evidence" value="ECO:0007669"/>
    <property type="project" value="InterPro"/>
</dbReference>
<dbReference type="GO" id="GO:0046872">
    <property type="term" value="F:metal ion binding"/>
    <property type="evidence" value="ECO:0007669"/>
    <property type="project" value="UniProtKB-KW"/>
</dbReference>
<dbReference type="FunFam" id="1.10.760.10:FF:000008">
    <property type="entry name" value="Cytochrome c"/>
    <property type="match status" value="1"/>
</dbReference>
<dbReference type="Gene3D" id="1.10.760.10">
    <property type="entry name" value="Cytochrome c-like domain"/>
    <property type="match status" value="1"/>
</dbReference>
<dbReference type="InterPro" id="IPR009056">
    <property type="entry name" value="Cyt_c-like_dom"/>
</dbReference>
<dbReference type="InterPro" id="IPR036909">
    <property type="entry name" value="Cyt_c-like_dom_sf"/>
</dbReference>
<dbReference type="InterPro" id="IPR002327">
    <property type="entry name" value="Cyt_c_1A/1B"/>
</dbReference>
<dbReference type="PANTHER" id="PTHR11961">
    <property type="entry name" value="CYTOCHROME C"/>
    <property type="match status" value="1"/>
</dbReference>
<dbReference type="Pfam" id="PF00034">
    <property type="entry name" value="Cytochrom_C"/>
    <property type="match status" value="1"/>
</dbReference>
<dbReference type="PRINTS" id="PR00604">
    <property type="entry name" value="CYTCHRMECIAB"/>
</dbReference>
<dbReference type="SUPFAM" id="SSF46626">
    <property type="entry name" value="Cytochrome c"/>
    <property type="match status" value="1"/>
</dbReference>
<dbReference type="PROSITE" id="PS51007">
    <property type="entry name" value="CYTC"/>
    <property type="match status" value="1"/>
</dbReference>
<comment type="function">
    <text>Electron carrier protein. The oxidized form of the cytochrome c heme group can accept an electron from the heme group of the cytochrome c1 subunit of cytochrome reductase. Cytochrome c then transfers this electron to the cytochrome oxidase complex, the final protein carrier in the mitochondrial electron-transport chain.</text>
</comment>
<comment type="subcellular location">
    <subcellularLocation>
        <location>Mitochondrion intermembrane space</location>
    </subcellularLocation>
    <text>Loosely associated with the inner membrane.</text>
</comment>
<comment type="PTM">
    <text>Binds 1 heme c group covalently per subunit.</text>
</comment>
<comment type="similarity">
    <text evidence="2">Belongs to the cytochrome c family.</text>
</comment>
<comment type="online information" name="Protein Spotlight">
    <link uri="https://www.proteinspotlight.org/back_issues/076"/>
    <text>Life shuttle - Issue 76 of November 2006</text>
</comment>
<sequence>MGDVEKGKKIFVQKCAQCHTVEKGGKHKTGPNLNGLIGRKTGQAEGFSYTEANKNKGITWGEETLMEYLENPKKYIPGTKMIFAGIKKKAERADLIAYLKDATSK</sequence>
<proteinExistence type="evidence at protein level"/>
<organism>
    <name type="scientific">Chelydra serpentina</name>
    <name type="common">Snapping turtle</name>
    <name type="synonym">Testudo serpentina</name>
    <dbReference type="NCBI Taxonomy" id="8475"/>
    <lineage>
        <taxon>Eukaryota</taxon>
        <taxon>Metazoa</taxon>
        <taxon>Chordata</taxon>
        <taxon>Craniata</taxon>
        <taxon>Vertebrata</taxon>
        <taxon>Euteleostomi</taxon>
        <taxon>Archelosauria</taxon>
        <taxon>Testudinata</taxon>
        <taxon>Testudines</taxon>
        <taxon>Cryptodira</taxon>
        <taxon>Durocryptodira</taxon>
        <taxon>Americhelydia</taxon>
        <taxon>Chelydroidea</taxon>
        <taxon>Chelydridae</taxon>
        <taxon>Chelydra</taxon>
    </lineage>
</organism>
<accession>P00022</accession>
<reference key="1">
    <citation type="journal article" date="1966" name="Biochemistry">
        <title>Primary structure of the cytochrome c from the snapping turtle, Chelydra serpentina.</title>
        <authorList>
            <person name="Chan S.K."/>
            <person name="Tulloss I."/>
            <person name="Margoliash E."/>
        </authorList>
    </citation>
    <scope>PROTEIN SEQUENCE OF 2-105</scope>
    <scope>ACETYLATION AT GLY-2</scope>
</reference>